<gene>
    <name evidence="1" type="primary">groEL</name>
    <name evidence="1" type="synonym">groL</name>
</gene>
<keyword id="KW-0067">ATP-binding</keyword>
<keyword id="KW-0143">Chaperone</keyword>
<keyword id="KW-0963">Cytoplasm</keyword>
<keyword id="KW-0413">Isomerase</keyword>
<keyword id="KW-0547">Nucleotide-binding</keyword>
<comment type="function">
    <text evidence="1">Together with its co-chaperonin GroES, plays an essential role in assisting protein folding. The GroEL-GroES system forms a nano-cage that allows encapsulation of the non-native substrate proteins and provides a physical environment optimized to promote and accelerate protein folding.</text>
</comment>
<comment type="catalytic activity">
    <reaction evidence="1">
        <text>ATP + H2O + a folded polypeptide = ADP + phosphate + an unfolded polypeptide.</text>
        <dbReference type="EC" id="5.6.1.7"/>
    </reaction>
</comment>
<comment type="subunit">
    <text evidence="1">Forms a cylinder of 14 subunits composed of two heptameric rings stacked back-to-back. Interacts with the co-chaperonin GroES.</text>
</comment>
<comment type="subcellular location">
    <subcellularLocation>
        <location evidence="1">Cytoplasm</location>
    </subcellularLocation>
</comment>
<comment type="similarity">
    <text evidence="1">Belongs to the chaperonin (HSP60) family.</text>
</comment>
<dbReference type="EC" id="5.6.1.7" evidence="1"/>
<dbReference type="EMBL" id="AY057439">
    <property type="protein sequence ID" value="AAL25964.1"/>
    <property type="molecule type" value="Genomic_DNA"/>
</dbReference>
<dbReference type="SMR" id="Q8GBB4"/>
<dbReference type="GO" id="GO:0005737">
    <property type="term" value="C:cytoplasm"/>
    <property type="evidence" value="ECO:0007669"/>
    <property type="project" value="UniProtKB-SubCell"/>
</dbReference>
<dbReference type="GO" id="GO:0005524">
    <property type="term" value="F:ATP binding"/>
    <property type="evidence" value="ECO:0007669"/>
    <property type="project" value="UniProtKB-UniRule"/>
</dbReference>
<dbReference type="GO" id="GO:0140662">
    <property type="term" value="F:ATP-dependent protein folding chaperone"/>
    <property type="evidence" value="ECO:0007669"/>
    <property type="project" value="InterPro"/>
</dbReference>
<dbReference type="GO" id="GO:0016853">
    <property type="term" value="F:isomerase activity"/>
    <property type="evidence" value="ECO:0007669"/>
    <property type="project" value="UniProtKB-KW"/>
</dbReference>
<dbReference type="GO" id="GO:0051082">
    <property type="term" value="F:unfolded protein binding"/>
    <property type="evidence" value="ECO:0007669"/>
    <property type="project" value="UniProtKB-UniRule"/>
</dbReference>
<dbReference type="GO" id="GO:0042026">
    <property type="term" value="P:protein refolding"/>
    <property type="evidence" value="ECO:0007669"/>
    <property type="project" value="UniProtKB-UniRule"/>
</dbReference>
<dbReference type="CDD" id="cd03344">
    <property type="entry name" value="GroEL"/>
    <property type="match status" value="1"/>
</dbReference>
<dbReference type="FunFam" id="1.10.560.10:FF:000001">
    <property type="entry name" value="60 kDa chaperonin"/>
    <property type="match status" value="1"/>
</dbReference>
<dbReference type="FunFam" id="3.50.7.10:FF:000001">
    <property type="entry name" value="60 kDa chaperonin"/>
    <property type="match status" value="1"/>
</dbReference>
<dbReference type="Gene3D" id="3.50.7.10">
    <property type="entry name" value="GroEL"/>
    <property type="match status" value="1"/>
</dbReference>
<dbReference type="Gene3D" id="1.10.560.10">
    <property type="entry name" value="GroEL-like equatorial domain"/>
    <property type="match status" value="1"/>
</dbReference>
<dbReference type="Gene3D" id="3.30.260.10">
    <property type="entry name" value="TCP-1-like chaperonin intermediate domain"/>
    <property type="match status" value="1"/>
</dbReference>
<dbReference type="HAMAP" id="MF_00600">
    <property type="entry name" value="CH60"/>
    <property type="match status" value="1"/>
</dbReference>
<dbReference type="InterPro" id="IPR018370">
    <property type="entry name" value="Chaperonin_Cpn60_CS"/>
</dbReference>
<dbReference type="InterPro" id="IPR001844">
    <property type="entry name" value="Cpn60/GroEL"/>
</dbReference>
<dbReference type="InterPro" id="IPR002423">
    <property type="entry name" value="Cpn60/GroEL/TCP-1"/>
</dbReference>
<dbReference type="InterPro" id="IPR027409">
    <property type="entry name" value="GroEL-like_apical_dom_sf"/>
</dbReference>
<dbReference type="InterPro" id="IPR027413">
    <property type="entry name" value="GROEL-like_equatorial_sf"/>
</dbReference>
<dbReference type="InterPro" id="IPR027410">
    <property type="entry name" value="TCP-1-like_intermed_sf"/>
</dbReference>
<dbReference type="NCBIfam" id="TIGR02348">
    <property type="entry name" value="GroEL"/>
    <property type="match status" value="1"/>
</dbReference>
<dbReference type="NCBIfam" id="NF000592">
    <property type="entry name" value="PRK00013.1"/>
    <property type="match status" value="1"/>
</dbReference>
<dbReference type="NCBIfam" id="NF009487">
    <property type="entry name" value="PRK12849.1"/>
    <property type="match status" value="1"/>
</dbReference>
<dbReference type="NCBIfam" id="NF009488">
    <property type="entry name" value="PRK12850.1"/>
    <property type="match status" value="1"/>
</dbReference>
<dbReference type="NCBIfam" id="NF009489">
    <property type="entry name" value="PRK12851.1"/>
    <property type="match status" value="1"/>
</dbReference>
<dbReference type="PANTHER" id="PTHR45633">
    <property type="entry name" value="60 KDA HEAT SHOCK PROTEIN, MITOCHONDRIAL"/>
    <property type="match status" value="1"/>
</dbReference>
<dbReference type="Pfam" id="PF00118">
    <property type="entry name" value="Cpn60_TCP1"/>
    <property type="match status" value="1"/>
</dbReference>
<dbReference type="PRINTS" id="PR00298">
    <property type="entry name" value="CHAPERONIN60"/>
</dbReference>
<dbReference type="SUPFAM" id="SSF52029">
    <property type="entry name" value="GroEL apical domain-like"/>
    <property type="match status" value="1"/>
</dbReference>
<dbReference type="SUPFAM" id="SSF48592">
    <property type="entry name" value="GroEL equatorial domain-like"/>
    <property type="match status" value="1"/>
</dbReference>
<dbReference type="SUPFAM" id="SSF54849">
    <property type="entry name" value="GroEL-intermediate domain like"/>
    <property type="match status" value="1"/>
</dbReference>
<dbReference type="PROSITE" id="PS00296">
    <property type="entry name" value="CHAPERONINS_CPN60"/>
    <property type="match status" value="1"/>
</dbReference>
<feature type="chain" id="PRO_0000063266" description="Chaperonin GroEL">
    <location>
        <begin position="1"/>
        <end position="546"/>
    </location>
</feature>
<feature type="binding site" evidence="1">
    <location>
        <begin position="30"/>
        <end position="33"/>
    </location>
    <ligand>
        <name>ATP</name>
        <dbReference type="ChEBI" id="CHEBI:30616"/>
    </ligand>
</feature>
<feature type="binding site" evidence="1">
    <location>
        <position position="51"/>
    </location>
    <ligand>
        <name>ATP</name>
        <dbReference type="ChEBI" id="CHEBI:30616"/>
    </ligand>
</feature>
<feature type="binding site" evidence="1">
    <location>
        <begin position="87"/>
        <end position="91"/>
    </location>
    <ligand>
        <name>ATP</name>
        <dbReference type="ChEBI" id="CHEBI:30616"/>
    </ligand>
</feature>
<feature type="binding site" evidence="1">
    <location>
        <position position="415"/>
    </location>
    <ligand>
        <name>ATP</name>
        <dbReference type="ChEBI" id="CHEBI:30616"/>
    </ligand>
</feature>
<feature type="binding site" evidence="1">
    <location>
        <begin position="479"/>
        <end position="481"/>
    </location>
    <ligand>
        <name>ATP</name>
        <dbReference type="ChEBI" id="CHEBI:30616"/>
    </ligand>
</feature>
<feature type="binding site" evidence="1">
    <location>
        <position position="495"/>
    </location>
    <ligand>
        <name>ATP</name>
        <dbReference type="ChEBI" id="CHEBI:30616"/>
    </ligand>
</feature>
<proteinExistence type="inferred from homology"/>
<reference key="1">
    <citation type="submission" date="2002-11" db="EMBL/GenBank/DDBJ databases">
        <title>An active group II intron has invaded the genus Azotobacter and is inserted within the essential groEL gene.</title>
        <authorList>
            <person name="Ferat J.-L."/>
            <person name="Legouar M."/>
            <person name="Michel F."/>
        </authorList>
    </citation>
    <scope>NUCLEOTIDE SEQUENCE [GENOMIC DNA]</scope>
    <source>
        <strain>UWR</strain>
    </source>
</reference>
<evidence type="ECO:0000255" key="1">
    <source>
        <dbReference type="HAMAP-Rule" id="MF_00600"/>
    </source>
</evidence>
<protein>
    <recommendedName>
        <fullName evidence="1">Chaperonin GroEL</fullName>
        <ecNumber evidence="1">5.6.1.7</ecNumber>
    </recommendedName>
    <alternativeName>
        <fullName evidence="1">60 kDa chaperonin</fullName>
    </alternativeName>
    <alternativeName>
        <fullName evidence="1">Chaperonin-60</fullName>
        <shortName evidence="1">Cpn60</shortName>
    </alternativeName>
</protein>
<name>CH60_AZOVI</name>
<sequence length="546" mass="56876">MAAKEVKFGDSARKKMLVGVNVLADAVKATLGPKGRNVVLDKSFGAPTITKDGVSVAKEIELKDKFENMGAQLVKDVASKANDEAGDGTTTATVLAQAIVNEGLKAVAAGMNPMDLKRGIDKATIAIVAELKSLAKPCSDSKAIAQVGTISANSDESIGNIIAEAMNKVGKEGVITVEEGSGLENELSVVEGMQFDRGYLSPYFINKPDTMVAELDNPLLLLVDKKISNIRELLPVLEAVAKSGRPLLIVAEDVEGEALATLVVNNMRGIVKVAAVKAPGFNDRRKAMLQVIAILTGATVISEKVGLSLESATLEHLGKPKALVLNKENTTIMHGAGAQADIEAAVAQIRKQIEETSSDYDREKLQERLAKLAGGVAVIKVGAATEVEMKEKKARVEAALHATRAAVEEGVVPGGGVALVRALQAIEGLKGDNEDQNVGIALLRRAVEAPLRQIVANAGDEPSVVVDKVKQGSGNFGFNAASGVYGDMIEMGILDPAKVTRSALQAASSIGGLMITTEAMVADIVEDKAAPAMPDMGGMGGMGGMM</sequence>
<organism>
    <name type="scientific">Azotobacter vinelandii</name>
    <dbReference type="NCBI Taxonomy" id="354"/>
    <lineage>
        <taxon>Bacteria</taxon>
        <taxon>Pseudomonadati</taxon>
        <taxon>Pseudomonadota</taxon>
        <taxon>Gammaproteobacteria</taxon>
        <taxon>Pseudomonadales</taxon>
        <taxon>Pseudomonadaceae</taxon>
        <taxon>Azotobacter</taxon>
    </lineage>
</organism>
<accession>Q8GBB4</accession>